<comment type="function">
    <text>Specifies differentiation of the set of six touch receptor neurons. Binds cooperatively as a heterodimer with unc-86 to sites in the mec-3 gene promoter.</text>
</comment>
<comment type="subcellular location">
    <subcellularLocation>
        <location>Nucleus</location>
    </subcellularLocation>
</comment>
<reference key="1">
    <citation type="journal article" date="1991" name="Genes Dev.">
        <title>The mec-3 gene contains cis-acting elements mediating positive and negative regulation in cells produced by asymmetric cell division in Caenorhabditis elegans.</title>
        <authorList>
            <person name="Way J.C."/>
            <person name="Wang L."/>
            <person name="Run J.Q."/>
            <person name="Wang A."/>
        </authorList>
    </citation>
    <scope>NUCLEOTIDE SEQUENCE [GENOMIC DNA]</scope>
</reference>
<sequence>MELLESKPLSAISMVIDSIGVDHDSQNKCNCCNEQIYDRFIYRMDNHSYHENCVKCTICESPLAEKCFWKNGRIYCSQHYYKDHSSHRCAGCKKGVSPTDMVYKLKAGLVFHVECHCCSLCGRHLSPGEQILVDDTMMTVSCMTHYPPQMDDSCGPPAGTSEVPSCSSDSAIAPYPMDEGFPSAFQVKKEVDAYGYNFEHYSFSDFCDDDSRMLKRRGPRTTIKQNQLDVLNEMFSNTPKPSKHARAKKALETGLSMRVIQVWFQNRRSKERRLKHLCNYLRHYEQRGLIPPPIHFRNEEMDTTDFNSFCGNFEEEDDED</sequence>
<organism>
    <name type="scientific">Caenorhabditis remanei</name>
    <name type="common">Caenorhabditis vulgaris</name>
    <dbReference type="NCBI Taxonomy" id="31234"/>
    <lineage>
        <taxon>Eukaryota</taxon>
        <taxon>Metazoa</taxon>
        <taxon>Ecdysozoa</taxon>
        <taxon>Nematoda</taxon>
        <taxon>Chromadorea</taxon>
        <taxon>Rhabditida</taxon>
        <taxon>Rhabditina</taxon>
        <taxon>Rhabditomorpha</taxon>
        <taxon>Rhabditoidea</taxon>
        <taxon>Rhabditidae</taxon>
        <taxon>Peloderinae</taxon>
        <taxon>Caenorhabditis</taxon>
    </lineage>
</organism>
<evidence type="ECO:0000255" key="1">
    <source>
        <dbReference type="PROSITE-ProRule" id="PRU00108"/>
    </source>
</evidence>
<evidence type="ECO:0000255" key="2">
    <source>
        <dbReference type="PROSITE-ProRule" id="PRU00125"/>
    </source>
</evidence>
<keyword id="KW-0217">Developmental protein</keyword>
<keyword id="KW-0238">DNA-binding</keyword>
<keyword id="KW-0371">Homeobox</keyword>
<keyword id="KW-0440">LIM domain</keyword>
<keyword id="KW-0479">Metal-binding</keyword>
<keyword id="KW-0539">Nucleus</keyword>
<keyword id="KW-0677">Repeat</keyword>
<keyword id="KW-0862">Zinc</keyword>
<name>MEC3_CAERE</name>
<feature type="chain" id="PRO_0000075841" description="Mechanosensory protein 3">
    <location>
        <begin position="1"/>
        <end position="320"/>
    </location>
</feature>
<feature type="domain" description="LIM zinc-binding 1" evidence="2">
    <location>
        <begin position="29"/>
        <end position="79"/>
    </location>
</feature>
<feature type="domain" description="LIM zinc-binding 2" evidence="2">
    <location>
        <begin position="89"/>
        <end position="145"/>
    </location>
</feature>
<feature type="DNA-binding region" description="Homeobox" evidence="1">
    <location>
        <begin position="216"/>
        <end position="275"/>
    </location>
</feature>
<gene>
    <name type="primary">mec-3</name>
</gene>
<proteinExistence type="predicted"/>
<protein>
    <recommendedName>
        <fullName>Mechanosensory protein 3</fullName>
    </recommendedName>
</protein>
<accession>P34765</accession>
<dbReference type="EMBL" id="X63956">
    <property type="protein sequence ID" value="CAA45377.1"/>
    <property type="molecule type" value="Genomic_DNA"/>
</dbReference>
<dbReference type="PIR" id="A39479">
    <property type="entry name" value="A39479"/>
</dbReference>
<dbReference type="SMR" id="P34765"/>
<dbReference type="eggNOG" id="KOG0490">
    <property type="taxonomic scope" value="Eukaryota"/>
</dbReference>
<dbReference type="HOGENOM" id="CLU_027802_2_1_1"/>
<dbReference type="GO" id="GO:0005634">
    <property type="term" value="C:nucleus"/>
    <property type="evidence" value="ECO:0007669"/>
    <property type="project" value="UniProtKB-SubCell"/>
</dbReference>
<dbReference type="GO" id="GO:0000981">
    <property type="term" value="F:DNA-binding transcription factor activity, RNA polymerase II-specific"/>
    <property type="evidence" value="ECO:0007669"/>
    <property type="project" value="TreeGrafter"/>
</dbReference>
<dbReference type="GO" id="GO:0046872">
    <property type="term" value="F:metal ion binding"/>
    <property type="evidence" value="ECO:0007669"/>
    <property type="project" value="UniProtKB-KW"/>
</dbReference>
<dbReference type="GO" id="GO:0000977">
    <property type="term" value="F:RNA polymerase II transcription regulatory region sequence-specific DNA binding"/>
    <property type="evidence" value="ECO:0007669"/>
    <property type="project" value="TreeGrafter"/>
</dbReference>
<dbReference type="GO" id="GO:0030182">
    <property type="term" value="P:neuron differentiation"/>
    <property type="evidence" value="ECO:0007669"/>
    <property type="project" value="TreeGrafter"/>
</dbReference>
<dbReference type="CDD" id="cd00086">
    <property type="entry name" value="homeodomain"/>
    <property type="match status" value="1"/>
</dbReference>
<dbReference type="FunFam" id="1.10.10.60:FF:000620">
    <property type="entry name" value="Mechanosensory protein 3"/>
    <property type="match status" value="1"/>
</dbReference>
<dbReference type="FunFam" id="2.10.110.10:FF:000137">
    <property type="entry name" value="Mechanosensory protein 3"/>
    <property type="match status" value="1"/>
</dbReference>
<dbReference type="Gene3D" id="2.10.110.10">
    <property type="entry name" value="Cysteine Rich Protein"/>
    <property type="match status" value="2"/>
</dbReference>
<dbReference type="Gene3D" id="1.10.10.60">
    <property type="entry name" value="Homeodomain-like"/>
    <property type="match status" value="1"/>
</dbReference>
<dbReference type="InterPro" id="IPR001356">
    <property type="entry name" value="HD"/>
</dbReference>
<dbReference type="InterPro" id="IPR009057">
    <property type="entry name" value="Homeodomain-like_sf"/>
</dbReference>
<dbReference type="InterPro" id="IPR050453">
    <property type="entry name" value="LIM_Homeobox_TF"/>
</dbReference>
<dbReference type="InterPro" id="IPR001781">
    <property type="entry name" value="Znf_LIM"/>
</dbReference>
<dbReference type="PANTHER" id="PTHR24208">
    <property type="entry name" value="LIM/HOMEOBOX PROTEIN LHX"/>
    <property type="match status" value="1"/>
</dbReference>
<dbReference type="PANTHER" id="PTHR24208:SF170">
    <property type="entry name" value="MECHANOSENSORY PROTEIN 3"/>
    <property type="match status" value="1"/>
</dbReference>
<dbReference type="Pfam" id="PF00046">
    <property type="entry name" value="Homeodomain"/>
    <property type="match status" value="1"/>
</dbReference>
<dbReference type="Pfam" id="PF00412">
    <property type="entry name" value="LIM"/>
    <property type="match status" value="2"/>
</dbReference>
<dbReference type="SMART" id="SM00389">
    <property type="entry name" value="HOX"/>
    <property type="match status" value="1"/>
</dbReference>
<dbReference type="SMART" id="SM00132">
    <property type="entry name" value="LIM"/>
    <property type="match status" value="2"/>
</dbReference>
<dbReference type="SUPFAM" id="SSF57716">
    <property type="entry name" value="Glucocorticoid receptor-like (DNA-binding domain)"/>
    <property type="match status" value="1"/>
</dbReference>
<dbReference type="SUPFAM" id="SSF46689">
    <property type="entry name" value="Homeodomain-like"/>
    <property type="match status" value="1"/>
</dbReference>
<dbReference type="PROSITE" id="PS50071">
    <property type="entry name" value="HOMEOBOX_2"/>
    <property type="match status" value="1"/>
</dbReference>
<dbReference type="PROSITE" id="PS00478">
    <property type="entry name" value="LIM_DOMAIN_1"/>
    <property type="match status" value="2"/>
</dbReference>
<dbReference type="PROSITE" id="PS50023">
    <property type="entry name" value="LIM_DOMAIN_2"/>
    <property type="match status" value="2"/>
</dbReference>